<accession>Q28DP6</accession>
<name>PAX3_XENTR</name>
<organism>
    <name type="scientific">Xenopus tropicalis</name>
    <name type="common">Western clawed frog</name>
    <name type="synonym">Silurana tropicalis</name>
    <dbReference type="NCBI Taxonomy" id="8364"/>
    <lineage>
        <taxon>Eukaryota</taxon>
        <taxon>Metazoa</taxon>
        <taxon>Chordata</taxon>
        <taxon>Craniata</taxon>
        <taxon>Vertebrata</taxon>
        <taxon>Euteleostomi</taxon>
        <taxon>Amphibia</taxon>
        <taxon>Batrachia</taxon>
        <taxon>Anura</taxon>
        <taxon>Pipoidea</taxon>
        <taxon>Pipidae</taxon>
        <taxon>Xenopodinae</taxon>
        <taxon>Xenopus</taxon>
        <taxon>Silurana</taxon>
    </lineage>
</organism>
<feature type="chain" id="PRO_0000365107" description="Paired box protein Pax-3">
    <location>
        <begin position="1"/>
        <end position="461"/>
    </location>
</feature>
<feature type="DNA-binding region" description="Paired" evidence="5">
    <location>
        <begin position="34"/>
        <end position="171"/>
    </location>
</feature>
<feature type="DNA-binding region" description="Homeobox" evidence="4">
    <location>
        <begin position="196"/>
        <end position="255"/>
    </location>
</feature>
<feature type="region of interest" description="Disordered" evidence="6">
    <location>
        <begin position="1"/>
        <end position="21"/>
    </location>
</feature>
<feature type="region of interest" description="PAI subdomain" evidence="5">
    <location>
        <begin position="37"/>
        <end position="93"/>
    </location>
</feature>
<feature type="region of interest" description="RED subdomain" evidence="5">
    <location>
        <begin position="113"/>
        <end position="171"/>
    </location>
</feature>
<feature type="region of interest" description="Disordered" evidence="6">
    <location>
        <begin position="141"/>
        <end position="205"/>
    </location>
</feature>
<feature type="region of interest" description="Disordered" evidence="6">
    <location>
        <begin position="290"/>
        <end position="330"/>
    </location>
</feature>
<feature type="compositionally biased region" description="Basic and acidic residues" evidence="6">
    <location>
        <begin position="148"/>
        <end position="172"/>
    </location>
</feature>
<feature type="compositionally biased region" description="Acidic residues" evidence="6">
    <location>
        <begin position="177"/>
        <end position="188"/>
    </location>
</feature>
<feature type="compositionally biased region" description="Polar residues" evidence="6">
    <location>
        <begin position="290"/>
        <end position="306"/>
    </location>
</feature>
<feature type="compositionally biased region" description="Low complexity" evidence="6">
    <location>
        <begin position="319"/>
        <end position="329"/>
    </location>
</feature>
<proteinExistence type="evidence at transcript level"/>
<protein>
    <recommendedName>
        <fullName evidence="1">Paired box protein Pax-3</fullName>
    </recommendedName>
    <alternativeName>
        <fullName evidence="2">Paired-domain transcription factor Pax3</fullName>
    </alternativeName>
</protein>
<gene>
    <name evidence="8" type="primary">pax3</name>
    <name type="ORF">TNeu048l09.1</name>
</gene>
<reference evidence="8" key="1">
    <citation type="submission" date="2006-10" db="EMBL/GenBank/DDBJ databases">
        <authorList>
            <consortium name="Sanger Xenopus tropicalis EST/cDNA project"/>
        </authorList>
    </citation>
    <scope>NUCLEOTIDE SEQUENCE [LARGE SCALE MRNA]</scope>
    <source>
        <tissue evidence="8">Neurula</tissue>
    </source>
</reference>
<keyword id="KW-0217">Developmental protein</keyword>
<keyword id="KW-0221">Differentiation</keyword>
<keyword id="KW-0238">DNA-binding</keyword>
<keyword id="KW-0371">Homeobox</keyword>
<keyword id="KW-0524">Neurogenesis</keyword>
<keyword id="KW-0539">Nucleus</keyword>
<keyword id="KW-0563">Paired box</keyword>
<keyword id="KW-1185">Reference proteome</keyword>
<keyword id="KW-0804">Transcription</keyword>
<keyword id="KW-0805">Transcription regulation</keyword>
<keyword id="KW-0879">Wnt signaling pathway</keyword>
<evidence type="ECO:0000250" key="1">
    <source>
        <dbReference type="UniProtKB" id="P23760"/>
    </source>
</evidence>
<evidence type="ECO:0000250" key="2">
    <source>
        <dbReference type="UniProtKB" id="Q645N4"/>
    </source>
</evidence>
<evidence type="ECO:0000255" key="3"/>
<evidence type="ECO:0000255" key="4">
    <source>
        <dbReference type="PROSITE-ProRule" id="PRU00108"/>
    </source>
</evidence>
<evidence type="ECO:0000255" key="5">
    <source>
        <dbReference type="PROSITE-ProRule" id="PRU00381"/>
    </source>
</evidence>
<evidence type="ECO:0000256" key="6">
    <source>
        <dbReference type="SAM" id="MobiDB-lite"/>
    </source>
</evidence>
<evidence type="ECO:0000305" key="7"/>
<evidence type="ECO:0000312" key="8">
    <source>
        <dbReference type="EMBL" id="CAJ82363.1"/>
    </source>
</evidence>
<sequence>MTSLAGAVPRMMRPGPGQNYPRTGFPLEVSTPLGQGRVNQLGGVFINGRPLPNHIRHKIVEMAHHGIRPCVISRQLRVSHGCVSKILCRYQETGSIRPGAIGGSKPKQVTTPEVEKKIEEFKRDNPVSSISRILRSKFGKGDEEDIELDRKEQEESEKRAKHSIDGILRERAPASPESEEGSDIDSEPDLPLKRKQRRSRTTFTAEQLEELERAFERTHYPDIYTREELAQRAKLTEARVQVWFSNRRARWRKQAGANQLMAFNHLIPGAFPPAAMPALPTYQLSETSYQPTSIPQAVSDPSNTVHRPQPLPPSSVHQSSLPSNPESSSAYCLPSGRHGFSSYTDSFVPPSGPSNPMNPAIGNGLSPQVMGLLTNHGGVPHQPQTDYALSPLTGGLEPPTAVSASCSQRLEHMKSLDSLSTSQSYCPPTYSTSGYSMEPVTGYQYPQYGQSAFHYLKPDIA</sequence>
<dbReference type="EMBL" id="CR855399">
    <property type="protein sequence ID" value="CAJ82363.1"/>
    <property type="status" value="ALT_INIT"/>
    <property type="molecule type" value="mRNA"/>
</dbReference>
<dbReference type="RefSeq" id="NP_001006776.2">
    <property type="nucleotide sequence ID" value="NM_001006775.2"/>
</dbReference>
<dbReference type="SMR" id="Q28DP6"/>
<dbReference type="FunCoup" id="Q28DP6">
    <property type="interactions" value="883"/>
</dbReference>
<dbReference type="STRING" id="8364.ENSXETP00000016214"/>
<dbReference type="PaxDb" id="8364-ENSXETP00000016629"/>
<dbReference type="DNASU" id="448464"/>
<dbReference type="GeneID" id="448464"/>
<dbReference type="KEGG" id="xtr:448464"/>
<dbReference type="AGR" id="Xenbase:XB-GENE-482740"/>
<dbReference type="CTD" id="5077"/>
<dbReference type="Xenbase" id="XB-GENE-482740">
    <property type="gene designation" value="pax3"/>
</dbReference>
<dbReference type="eggNOG" id="KOG0849">
    <property type="taxonomic scope" value="Eukaryota"/>
</dbReference>
<dbReference type="HOGENOM" id="CLU_019281_8_0_1"/>
<dbReference type="InParanoid" id="Q28DP6"/>
<dbReference type="OrthoDB" id="6159439at2759"/>
<dbReference type="Proteomes" id="UP000008143">
    <property type="component" value="Chromosome 5"/>
</dbReference>
<dbReference type="GO" id="GO:0005634">
    <property type="term" value="C:nucleus"/>
    <property type="evidence" value="ECO:0000250"/>
    <property type="project" value="UniProtKB"/>
</dbReference>
<dbReference type="GO" id="GO:0003677">
    <property type="term" value="F:DNA binding"/>
    <property type="evidence" value="ECO:0007669"/>
    <property type="project" value="UniProtKB-KW"/>
</dbReference>
<dbReference type="GO" id="GO:0000981">
    <property type="term" value="F:DNA-binding transcription factor activity, RNA polymerase II-specific"/>
    <property type="evidence" value="ECO:0007669"/>
    <property type="project" value="InterPro"/>
</dbReference>
<dbReference type="GO" id="GO:0008543">
    <property type="term" value="P:fibroblast growth factor receptor signaling pathway"/>
    <property type="evidence" value="ECO:0000250"/>
    <property type="project" value="UniProtKB"/>
</dbReference>
<dbReference type="GO" id="GO:0048785">
    <property type="term" value="P:hatching gland development"/>
    <property type="evidence" value="ECO:0000250"/>
    <property type="project" value="UniProtKB"/>
</dbReference>
<dbReference type="GO" id="GO:0007399">
    <property type="term" value="P:nervous system development"/>
    <property type="evidence" value="ECO:0007669"/>
    <property type="project" value="UniProtKB-KW"/>
</dbReference>
<dbReference type="GO" id="GO:0014034">
    <property type="term" value="P:neural crest cell fate commitment"/>
    <property type="evidence" value="ECO:0000250"/>
    <property type="project" value="UniProtKB"/>
</dbReference>
<dbReference type="GO" id="GO:0014029">
    <property type="term" value="P:neural crest formation"/>
    <property type="evidence" value="ECO:0000250"/>
    <property type="project" value="UniProtKB"/>
</dbReference>
<dbReference type="GO" id="GO:0045893">
    <property type="term" value="P:positive regulation of DNA-templated transcription"/>
    <property type="evidence" value="ECO:0000250"/>
    <property type="project" value="UniProtKB"/>
</dbReference>
<dbReference type="GO" id="GO:0016055">
    <property type="term" value="P:Wnt signaling pathway"/>
    <property type="evidence" value="ECO:0000250"/>
    <property type="project" value="UniProtKB"/>
</dbReference>
<dbReference type="CDD" id="cd00086">
    <property type="entry name" value="homeodomain"/>
    <property type="match status" value="1"/>
</dbReference>
<dbReference type="FunFam" id="1.10.10.60:FF:000035">
    <property type="entry name" value="paired box protein Pax-3 isoform X2"/>
    <property type="match status" value="1"/>
</dbReference>
<dbReference type="FunFam" id="1.10.10.10:FF:000031">
    <property type="entry name" value="Paired box protein Pax-7"/>
    <property type="match status" value="1"/>
</dbReference>
<dbReference type="Gene3D" id="1.10.10.60">
    <property type="entry name" value="Homeodomain-like"/>
    <property type="match status" value="1"/>
</dbReference>
<dbReference type="Gene3D" id="1.10.10.10">
    <property type="entry name" value="Winged helix-like DNA-binding domain superfamily/Winged helix DNA-binding domain"/>
    <property type="match status" value="2"/>
</dbReference>
<dbReference type="InterPro" id="IPR001356">
    <property type="entry name" value="HD"/>
</dbReference>
<dbReference type="InterPro" id="IPR017970">
    <property type="entry name" value="Homeobox_CS"/>
</dbReference>
<dbReference type="InterPro" id="IPR009057">
    <property type="entry name" value="Homeodomain-like_sf"/>
</dbReference>
<dbReference type="InterPro" id="IPR043182">
    <property type="entry name" value="PAIRED_DNA-bd_dom"/>
</dbReference>
<dbReference type="InterPro" id="IPR001523">
    <property type="entry name" value="Paired_dom"/>
</dbReference>
<dbReference type="InterPro" id="IPR022106">
    <property type="entry name" value="Pax7_C"/>
</dbReference>
<dbReference type="InterPro" id="IPR043565">
    <property type="entry name" value="PAX_fam"/>
</dbReference>
<dbReference type="InterPro" id="IPR036388">
    <property type="entry name" value="WH-like_DNA-bd_sf"/>
</dbReference>
<dbReference type="PANTHER" id="PTHR45636:SF17">
    <property type="entry name" value="PAIRED BOX PROTEIN PAX-3"/>
    <property type="match status" value="1"/>
</dbReference>
<dbReference type="PANTHER" id="PTHR45636">
    <property type="entry name" value="PAIRED BOX PROTEIN PAX-6-RELATED-RELATED"/>
    <property type="match status" value="1"/>
</dbReference>
<dbReference type="Pfam" id="PF00046">
    <property type="entry name" value="Homeodomain"/>
    <property type="match status" value="1"/>
</dbReference>
<dbReference type="Pfam" id="PF00292">
    <property type="entry name" value="PAX"/>
    <property type="match status" value="1"/>
</dbReference>
<dbReference type="Pfam" id="PF12360">
    <property type="entry name" value="Pax7"/>
    <property type="match status" value="1"/>
</dbReference>
<dbReference type="PRINTS" id="PR00027">
    <property type="entry name" value="PAIREDBOX"/>
</dbReference>
<dbReference type="SMART" id="SM00389">
    <property type="entry name" value="HOX"/>
    <property type="match status" value="1"/>
</dbReference>
<dbReference type="SMART" id="SM00351">
    <property type="entry name" value="PAX"/>
    <property type="match status" value="1"/>
</dbReference>
<dbReference type="SUPFAM" id="SSF46689">
    <property type="entry name" value="Homeodomain-like"/>
    <property type="match status" value="2"/>
</dbReference>
<dbReference type="PROSITE" id="PS00027">
    <property type="entry name" value="HOMEOBOX_1"/>
    <property type="match status" value="1"/>
</dbReference>
<dbReference type="PROSITE" id="PS50071">
    <property type="entry name" value="HOMEOBOX_2"/>
    <property type="match status" value="1"/>
</dbReference>
<dbReference type="PROSITE" id="PS00034">
    <property type="entry name" value="PAIRED_1"/>
    <property type="match status" value="1"/>
</dbReference>
<dbReference type="PROSITE" id="PS51057">
    <property type="entry name" value="PAIRED_2"/>
    <property type="match status" value="1"/>
</dbReference>
<comment type="function">
    <text evidence="2">Probable transcription factor. Promotes both hatching gland and neural crest cell fates, two of the cell populations that arise from the neural plate border. Acts downstream of msx1 to induce the neural crest, cooperating with zic1 and mediating signals from both the wnt and fgf8 signaling pathways. Induction of hatching gland cell fate is independent of zic1 (By similarity).</text>
</comment>
<comment type="subcellular location">
    <subcellularLocation>
        <location evidence="1 4 5">Nucleus</location>
    </subcellularLocation>
</comment>
<comment type="similarity">
    <text evidence="3">Belongs to the paired homeobox family.</text>
</comment>
<comment type="sequence caution" evidence="7">
    <conflict type="erroneous initiation">
        <sequence resource="EMBL-CDS" id="CAJ82363"/>
    </conflict>
</comment>